<dbReference type="EC" id="6.3.5.-" evidence="1"/>
<dbReference type="EMBL" id="BX569695">
    <property type="protein sequence ID" value="CAE08871.1"/>
    <property type="molecule type" value="Genomic_DNA"/>
</dbReference>
<dbReference type="RefSeq" id="WP_011129209.1">
    <property type="nucleotide sequence ID" value="NC_005070.1"/>
</dbReference>
<dbReference type="SMR" id="Q7U3S3"/>
<dbReference type="STRING" id="84588.SYNW2356"/>
<dbReference type="KEGG" id="syw:SYNW2356"/>
<dbReference type="eggNOG" id="COG0064">
    <property type="taxonomic scope" value="Bacteria"/>
</dbReference>
<dbReference type="HOGENOM" id="CLU_019240_0_0_3"/>
<dbReference type="Proteomes" id="UP000001422">
    <property type="component" value="Chromosome"/>
</dbReference>
<dbReference type="GO" id="GO:0050566">
    <property type="term" value="F:asparaginyl-tRNA synthase (glutamine-hydrolyzing) activity"/>
    <property type="evidence" value="ECO:0007669"/>
    <property type="project" value="RHEA"/>
</dbReference>
<dbReference type="GO" id="GO:0005524">
    <property type="term" value="F:ATP binding"/>
    <property type="evidence" value="ECO:0007669"/>
    <property type="project" value="UniProtKB-KW"/>
</dbReference>
<dbReference type="GO" id="GO:0050567">
    <property type="term" value="F:glutaminyl-tRNA synthase (glutamine-hydrolyzing) activity"/>
    <property type="evidence" value="ECO:0007669"/>
    <property type="project" value="UniProtKB-UniRule"/>
</dbReference>
<dbReference type="GO" id="GO:0070681">
    <property type="term" value="P:glutaminyl-tRNAGln biosynthesis via transamidation"/>
    <property type="evidence" value="ECO:0007669"/>
    <property type="project" value="TreeGrafter"/>
</dbReference>
<dbReference type="GO" id="GO:0006412">
    <property type="term" value="P:translation"/>
    <property type="evidence" value="ECO:0007669"/>
    <property type="project" value="UniProtKB-UniRule"/>
</dbReference>
<dbReference type="FunFam" id="1.10.10.410:FF:000001">
    <property type="entry name" value="Aspartyl/glutamyl-tRNA(Asn/Gln) amidotransferase subunit B"/>
    <property type="match status" value="1"/>
</dbReference>
<dbReference type="FunFam" id="1.10.150.380:FF:000001">
    <property type="entry name" value="Aspartyl/glutamyl-tRNA(Asn/Gln) amidotransferase subunit B"/>
    <property type="match status" value="1"/>
</dbReference>
<dbReference type="Gene3D" id="1.10.10.410">
    <property type="match status" value="1"/>
</dbReference>
<dbReference type="Gene3D" id="1.10.150.380">
    <property type="entry name" value="GatB domain, N-terminal subdomain"/>
    <property type="match status" value="1"/>
</dbReference>
<dbReference type="HAMAP" id="MF_00121">
    <property type="entry name" value="GatB"/>
    <property type="match status" value="1"/>
</dbReference>
<dbReference type="InterPro" id="IPR017959">
    <property type="entry name" value="Asn/Gln-tRNA_amidoTrfase_suB/E"/>
</dbReference>
<dbReference type="InterPro" id="IPR006075">
    <property type="entry name" value="Asn/Gln-tRNA_Trfase_suB/E_cat"/>
</dbReference>
<dbReference type="InterPro" id="IPR018027">
    <property type="entry name" value="Asn/Gln_amidotransferase"/>
</dbReference>
<dbReference type="InterPro" id="IPR003789">
    <property type="entry name" value="Asn/Gln_tRNA_amidoTrase-B-like"/>
</dbReference>
<dbReference type="InterPro" id="IPR004413">
    <property type="entry name" value="GatB"/>
</dbReference>
<dbReference type="InterPro" id="IPR042114">
    <property type="entry name" value="GatB_C_1"/>
</dbReference>
<dbReference type="InterPro" id="IPR023168">
    <property type="entry name" value="GatB_Yqey_C_2"/>
</dbReference>
<dbReference type="InterPro" id="IPR017958">
    <property type="entry name" value="Gln-tRNA_amidoTrfase_suB_CS"/>
</dbReference>
<dbReference type="InterPro" id="IPR014746">
    <property type="entry name" value="Gln_synth/guanido_kin_cat_dom"/>
</dbReference>
<dbReference type="NCBIfam" id="TIGR00133">
    <property type="entry name" value="gatB"/>
    <property type="match status" value="1"/>
</dbReference>
<dbReference type="NCBIfam" id="NF004012">
    <property type="entry name" value="PRK05477.1-2"/>
    <property type="match status" value="1"/>
</dbReference>
<dbReference type="NCBIfam" id="NF004014">
    <property type="entry name" value="PRK05477.1-4"/>
    <property type="match status" value="1"/>
</dbReference>
<dbReference type="PANTHER" id="PTHR11659">
    <property type="entry name" value="GLUTAMYL-TRNA GLN AMIDOTRANSFERASE SUBUNIT B MITOCHONDRIAL AND PROKARYOTIC PET112-RELATED"/>
    <property type="match status" value="1"/>
</dbReference>
<dbReference type="PANTHER" id="PTHR11659:SF0">
    <property type="entry name" value="GLUTAMYL-TRNA(GLN) AMIDOTRANSFERASE SUBUNIT B, MITOCHONDRIAL"/>
    <property type="match status" value="1"/>
</dbReference>
<dbReference type="Pfam" id="PF02934">
    <property type="entry name" value="GatB_N"/>
    <property type="match status" value="1"/>
</dbReference>
<dbReference type="Pfam" id="PF02637">
    <property type="entry name" value="GatB_Yqey"/>
    <property type="match status" value="1"/>
</dbReference>
<dbReference type="SMART" id="SM00845">
    <property type="entry name" value="GatB_Yqey"/>
    <property type="match status" value="1"/>
</dbReference>
<dbReference type="SUPFAM" id="SSF89095">
    <property type="entry name" value="GatB/YqeY motif"/>
    <property type="match status" value="1"/>
</dbReference>
<dbReference type="SUPFAM" id="SSF55931">
    <property type="entry name" value="Glutamine synthetase/guanido kinase"/>
    <property type="match status" value="1"/>
</dbReference>
<dbReference type="PROSITE" id="PS01234">
    <property type="entry name" value="GATB"/>
    <property type="match status" value="1"/>
</dbReference>
<proteinExistence type="inferred from homology"/>
<gene>
    <name evidence="1" type="primary">gatB</name>
    <name type="ordered locus">SYNW2356</name>
</gene>
<keyword id="KW-0067">ATP-binding</keyword>
<keyword id="KW-0436">Ligase</keyword>
<keyword id="KW-0547">Nucleotide-binding</keyword>
<keyword id="KW-0648">Protein biosynthesis</keyword>
<protein>
    <recommendedName>
        <fullName evidence="1">Aspartyl/glutamyl-tRNA(Asn/Gln) amidotransferase subunit B</fullName>
        <shortName evidence="1">Asp/Glu-ADT subunit B</shortName>
        <ecNumber evidence="1">6.3.5.-</ecNumber>
    </recommendedName>
</protein>
<sequence length="491" mass="54099">MAAAEPAWEAVIGLETHVQLGTDSKIFTAASTAFGDDPNTHIDPVVCGLPGTLPVLNQKVLEYAVKAAMALNLNIAEHSKFDRKQYFYPDLPKNYQISQYDEPIAEEGWIEVEVAEKGKDTYLKKIGIERLHMEEDAGKLVHAGSDRLAGSTHSLVDYNRAGVALAEIVSKPDLRTGREAAEYASEIRRIMRYLGVSDGNMQEGSLRCDVNISVRRGPDAPFGTKVEIKNMNSFSAIQKACEYEIKRQIKAYETGEPIVQETRLWDEGKQLTKSMRSKEGASDYRYFPDPDLGPIEVSVDQREAWRSELPELPAVKRHRYADDLGLSQYDARVLTDERPMADYFEAVVAAGADAKLSANWITGDIAAHVNSNRLSYAELPFRPEQLAEMVQLIDGGKISGKIAKEILPELLEKGGSPKAIVDERGLGMISDPAALQAIVDELLAAHPDEVKAFRGGKNKLQGFFVGQLMKKTGGKADPKLANQILSKKLKG</sequence>
<organism>
    <name type="scientific">Parasynechococcus marenigrum (strain WH8102)</name>
    <dbReference type="NCBI Taxonomy" id="84588"/>
    <lineage>
        <taxon>Bacteria</taxon>
        <taxon>Bacillati</taxon>
        <taxon>Cyanobacteriota</taxon>
        <taxon>Cyanophyceae</taxon>
        <taxon>Synechococcales</taxon>
        <taxon>Prochlorococcaceae</taxon>
        <taxon>Parasynechococcus</taxon>
        <taxon>Parasynechococcus marenigrum</taxon>
    </lineage>
</organism>
<evidence type="ECO:0000255" key="1">
    <source>
        <dbReference type="HAMAP-Rule" id="MF_00121"/>
    </source>
</evidence>
<reference key="1">
    <citation type="journal article" date="2003" name="Nature">
        <title>The genome of a motile marine Synechococcus.</title>
        <authorList>
            <person name="Palenik B."/>
            <person name="Brahamsha B."/>
            <person name="Larimer F.W."/>
            <person name="Land M.L."/>
            <person name="Hauser L."/>
            <person name="Chain P."/>
            <person name="Lamerdin J.E."/>
            <person name="Regala W."/>
            <person name="Allen E.E."/>
            <person name="McCarren J."/>
            <person name="Paulsen I.T."/>
            <person name="Dufresne A."/>
            <person name="Partensky F."/>
            <person name="Webb E.A."/>
            <person name="Waterbury J."/>
        </authorList>
    </citation>
    <scope>NUCLEOTIDE SEQUENCE [LARGE SCALE GENOMIC DNA]</scope>
    <source>
        <strain>WH8102</strain>
    </source>
</reference>
<feature type="chain" id="PRO_0000148855" description="Aspartyl/glutamyl-tRNA(Asn/Gln) amidotransferase subunit B">
    <location>
        <begin position="1"/>
        <end position="491"/>
    </location>
</feature>
<accession>Q7U3S3</accession>
<name>GATB_PARMW</name>
<comment type="function">
    <text evidence="1">Allows the formation of correctly charged Asn-tRNA(Asn) or Gln-tRNA(Gln) through the transamidation of misacylated Asp-tRNA(Asn) or Glu-tRNA(Gln) in organisms which lack either or both of asparaginyl-tRNA or glutaminyl-tRNA synthetases. The reaction takes place in the presence of glutamine and ATP through an activated phospho-Asp-tRNA(Asn) or phospho-Glu-tRNA(Gln).</text>
</comment>
<comment type="catalytic activity">
    <reaction evidence="1">
        <text>L-glutamyl-tRNA(Gln) + L-glutamine + ATP + H2O = L-glutaminyl-tRNA(Gln) + L-glutamate + ADP + phosphate + H(+)</text>
        <dbReference type="Rhea" id="RHEA:17521"/>
        <dbReference type="Rhea" id="RHEA-COMP:9681"/>
        <dbReference type="Rhea" id="RHEA-COMP:9684"/>
        <dbReference type="ChEBI" id="CHEBI:15377"/>
        <dbReference type="ChEBI" id="CHEBI:15378"/>
        <dbReference type="ChEBI" id="CHEBI:29985"/>
        <dbReference type="ChEBI" id="CHEBI:30616"/>
        <dbReference type="ChEBI" id="CHEBI:43474"/>
        <dbReference type="ChEBI" id="CHEBI:58359"/>
        <dbReference type="ChEBI" id="CHEBI:78520"/>
        <dbReference type="ChEBI" id="CHEBI:78521"/>
        <dbReference type="ChEBI" id="CHEBI:456216"/>
    </reaction>
</comment>
<comment type="catalytic activity">
    <reaction evidence="1">
        <text>L-aspartyl-tRNA(Asn) + L-glutamine + ATP + H2O = L-asparaginyl-tRNA(Asn) + L-glutamate + ADP + phosphate + 2 H(+)</text>
        <dbReference type="Rhea" id="RHEA:14513"/>
        <dbReference type="Rhea" id="RHEA-COMP:9674"/>
        <dbReference type="Rhea" id="RHEA-COMP:9677"/>
        <dbReference type="ChEBI" id="CHEBI:15377"/>
        <dbReference type="ChEBI" id="CHEBI:15378"/>
        <dbReference type="ChEBI" id="CHEBI:29985"/>
        <dbReference type="ChEBI" id="CHEBI:30616"/>
        <dbReference type="ChEBI" id="CHEBI:43474"/>
        <dbReference type="ChEBI" id="CHEBI:58359"/>
        <dbReference type="ChEBI" id="CHEBI:78515"/>
        <dbReference type="ChEBI" id="CHEBI:78516"/>
        <dbReference type="ChEBI" id="CHEBI:456216"/>
    </reaction>
</comment>
<comment type="subunit">
    <text evidence="1">Heterotrimer of A, B and C subunits.</text>
</comment>
<comment type="similarity">
    <text evidence="1">Belongs to the GatB/GatE family. GatB subfamily.</text>
</comment>